<protein>
    <recommendedName>
        <fullName>Serine/threonine-protein kinase Nek1</fullName>
        <ecNumber>2.7.11.1</ecNumber>
    </recommendedName>
    <alternativeName>
        <fullName>NimA-related protein kinase 1</fullName>
        <shortName>AtNek1</shortName>
    </alternativeName>
</protein>
<organism>
    <name type="scientific">Arabidopsis thaliana</name>
    <name type="common">Mouse-ear cress</name>
    <dbReference type="NCBI Taxonomy" id="3702"/>
    <lineage>
        <taxon>Eukaryota</taxon>
        <taxon>Viridiplantae</taxon>
        <taxon>Streptophyta</taxon>
        <taxon>Embryophyta</taxon>
        <taxon>Tracheophyta</taxon>
        <taxon>Spermatophyta</taxon>
        <taxon>Magnoliopsida</taxon>
        <taxon>eudicotyledons</taxon>
        <taxon>Gunneridae</taxon>
        <taxon>Pentapetalae</taxon>
        <taxon>rosids</taxon>
        <taxon>malvids</taxon>
        <taxon>Brassicales</taxon>
        <taxon>Brassicaceae</taxon>
        <taxon>Camelineae</taxon>
        <taxon>Arabidopsis</taxon>
    </lineage>
</organism>
<sequence length="612" mass="68836">MEQYEFLEQIGKGSFGSALLVRHKHEKKKYVLKKIRLARQTQRTRRSAHQEMELISKMRHPFIVEYKDSWVEKACYVCIVIGYCEGGDMAQAIKKSNGVHFQEEKLCKWLVQLLMGLEYLHSNHILHRDVKCSNIFLTKEQDIRLGDFGLAKILTSDDLTSSVVGTPSYMCPELLADIPYGSKSDIWSLGCCIYEMAYLKPAFKAFDMQALINKINKTIVSPLPAKYSGPFRGLVKSMLRKNPEVRPSASDLLRHPHLQPYVLDVKLRLNNLRRKTLPPELPSSKRIMKKAHFSEPAVTCPAFGERQHRSLWNDRALNPEAEEDTASSIKCISRRISDLSIESSSKGTLICKQVSSSACKVSKYPLAKSSVTSRRIMETGRRSDHLHPVSGGGTTSKIIPSARRTSLPLTKRATNQEVAAYNPIVGILQNVKSPEYSINEPQVDKIAIFPLAPYEQDIFFTPMQRKTSSKSSSVSDRSITKDKCTVQTHTTWQGIQLNMVDNISDGSSSSDQNATAGASSHTTSSSSRRCRFDPSSYRQRADALEGLLEFSARLLQEGRYDELNVLLKPFGPGKVSPRETAIWIAKSLKENRDKTKMVDLNVSREIPHVGLL</sequence>
<gene>
    <name type="primary">NEK1</name>
    <name type="ordered locus">At1g54510</name>
    <name type="ORF">F20D21.32/F20D21.33</name>
</gene>
<feature type="chain" id="PRO_0000314037" description="Serine/threonine-protein kinase Nek1">
    <location>
        <begin position="1"/>
        <end position="612"/>
    </location>
</feature>
<feature type="domain" description="Protein kinase" evidence="1">
    <location>
        <begin position="4"/>
        <end position="258"/>
    </location>
</feature>
<feature type="region of interest" description="Disordered" evidence="3">
    <location>
        <begin position="503"/>
        <end position="534"/>
    </location>
</feature>
<feature type="compositionally biased region" description="Polar residues" evidence="3">
    <location>
        <begin position="503"/>
        <end position="513"/>
    </location>
</feature>
<feature type="compositionally biased region" description="Low complexity" evidence="3">
    <location>
        <begin position="514"/>
        <end position="527"/>
    </location>
</feature>
<feature type="active site" description="Proton acceptor" evidence="1 2">
    <location>
        <position position="129"/>
    </location>
</feature>
<feature type="binding site" evidence="1">
    <location>
        <begin position="10"/>
        <end position="18"/>
    </location>
    <ligand>
        <name>ATP</name>
        <dbReference type="ChEBI" id="CHEBI:30616"/>
    </ligand>
</feature>
<feature type="binding site" evidence="1">
    <location>
        <position position="33"/>
    </location>
    <ligand>
        <name>ATP</name>
        <dbReference type="ChEBI" id="CHEBI:30616"/>
    </ligand>
</feature>
<dbReference type="EC" id="2.7.11.1"/>
<dbReference type="EMBL" id="AC005287">
    <property type="protein sequence ID" value="AAD25629.1"/>
    <property type="status" value="ALT_SEQ"/>
    <property type="molecule type" value="Genomic_DNA"/>
</dbReference>
<dbReference type="EMBL" id="AC005287">
    <property type="protein sequence ID" value="AAD25631.1"/>
    <property type="status" value="ALT_SEQ"/>
    <property type="molecule type" value="Genomic_DNA"/>
</dbReference>
<dbReference type="EMBL" id="CP002684">
    <property type="protein sequence ID" value="AEE33111.1"/>
    <property type="molecule type" value="Genomic_DNA"/>
</dbReference>
<dbReference type="EMBL" id="CP002684">
    <property type="protein sequence ID" value="AEE33112.1"/>
    <property type="molecule type" value="Genomic_DNA"/>
</dbReference>
<dbReference type="EMBL" id="CP002684">
    <property type="protein sequence ID" value="AEE33113.1"/>
    <property type="molecule type" value="Genomic_DNA"/>
</dbReference>
<dbReference type="EMBL" id="CP002684">
    <property type="protein sequence ID" value="ANM59722.1"/>
    <property type="molecule type" value="Genomic_DNA"/>
</dbReference>
<dbReference type="EMBL" id="BX816613">
    <property type="status" value="NOT_ANNOTATED_CDS"/>
    <property type="molecule type" value="mRNA"/>
</dbReference>
<dbReference type="PIR" id="A96587">
    <property type="entry name" value="A96587"/>
</dbReference>
<dbReference type="PIR" id="B96587">
    <property type="entry name" value="B96587"/>
</dbReference>
<dbReference type="RefSeq" id="NP_001185224.1">
    <property type="nucleotide sequence ID" value="NM_001198295.1"/>
</dbReference>
<dbReference type="RefSeq" id="NP_001185225.1">
    <property type="nucleotide sequence ID" value="NM_001198296.1"/>
</dbReference>
<dbReference type="RefSeq" id="NP_001319226.1">
    <property type="nucleotide sequence ID" value="NM_001333653.1"/>
</dbReference>
<dbReference type="RefSeq" id="NP_175853.1">
    <property type="nucleotide sequence ID" value="NM_104329.5"/>
</dbReference>
<dbReference type="SMR" id="Q9SLI2"/>
<dbReference type="FunCoup" id="Q9SLI2">
    <property type="interactions" value="1759"/>
</dbReference>
<dbReference type="STRING" id="3702.Q9SLI2"/>
<dbReference type="PaxDb" id="3702-AT1G54510.1"/>
<dbReference type="ProteomicsDB" id="250825"/>
<dbReference type="EnsemblPlants" id="AT1G54510.1">
    <property type="protein sequence ID" value="AT1G54510.1"/>
    <property type="gene ID" value="AT1G54510"/>
</dbReference>
<dbReference type="EnsemblPlants" id="AT1G54510.2">
    <property type="protein sequence ID" value="AT1G54510.2"/>
    <property type="gene ID" value="AT1G54510"/>
</dbReference>
<dbReference type="EnsemblPlants" id="AT1G54510.3">
    <property type="protein sequence ID" value="AT1G54510.3"/>
    <property type="gene ID" value="AT1G54510"/>
</dbReference>
<dbReference type="EnsemblPlants" id="AT1G54510.4">
    <property type="protein sequence ID" value="AT1G54510.4"/>
    <property type="gene ID" value="AT1G54510"/>
</dbReference>
<dbReference type="GeneID" id="841893"/>
<dbReference type="Gramene" id="AT1G54510.1">
    <property type="protein sequence ID" value="AT1G54510.1"/>
    <property type="gene ID" value="AT1G54510"/>
</dbReference>
<dbReference type="Gramene" id="AT1G54510.2">
    <property type="protein sequence ID" value="AT1G54510.2"/>
    <property type="gene ID" value="AT1G54510"/>
</dbReference>
<dbReference type="Gramene" id="AT1G54510.3">
    <property type="protein sequence ID" value="AT1G54510.3"/>
    <property type="gene ID" value="AT1G54510"/>
</dbReference>
<dbReference type="Gramene" id="AT1G54510.4">
    <property type="protein sequence ID" value="AT1G54510.4"/>
    <property type="gene ID" value="AT1G54510"/>
</dbReference>
<dbReference type="KEGG" id="ath:AT1G54510"/>
<dbReference type="Araport" id="AT1G54510"/>
<dbReference type="TAIR" id="AT1G54510">
    <property type="gene designation" value="NEK1"/>
</dbReference>
<dbReference type="eggNOG" id="KOG0589">
    <property type="taxonomic scope" value="Eukaryota"/>
</dbReference>
<dbReference type="HOGENOM" id="CLU_000288_128_3_1"/>
<dbReference type="InParanoid" id="Q9SLI2"/>
<dbReference type="OMA" id="VEKACYV"/>
<dbReference type="PhylomeDB" id="Q9SLI2"/>
<dbReference type="PRO" id="PR:Q9SLI2"/>
<dbReference type="Proteomes" id="UP000006548">
    <property type="component" value="Chromosome 1"/>
</dbReference>
<dbReference type="ExpressionAtlas" id="Q9SLI2">
    <property type="expression patterns" value="baseline and differential"/>
</dbReference>
<dbReference type="GO" id="GO:0005524">
    <property type="term" value="F:ATP binding"/>
    <property type="evidence" value="ECO:0007669"/>
    <property type="project" value="UniProtKB-KW"/>
</dbReference>
<dbReference type="GO" id="GO:0106310">
    <property type="term" value="F:protein serine kinase activity"/>
    <property type="evidence" value="ECO:0007669"/>
    <property type="project" value="RHEA"/>
</dbReference>
<dbReference type="GO" id="GO:0004674">
    <property type="term" value="F:protein serine/threonine kinase activity"/>
    <property type="evidence" value="ECO:0007669"/>
    <property type="project" value="UniProtKB-KW"/>
</dbReference>
<dbReference type="CDD" id="cd08215">
    <property type="entry name" value="STKc_Nek"/>
    <property type="match status" value="1"/>
</dbReference>
<dbReference type="FunFam" id="1.10.510.10:FF:001795">
    <property type="entry name" value="Serine/threonine-protein kinase Nek1"/>
    <property type="match status" value="1"/>
</dbReference>
<dbReference type="FunFam" id="3.30.200.20:FF:000108">
    <property type="entry name" value="Serine/threonine-protein kinase Nek2"/>
    <property type="match status" value="1"/>
</dbReference>
<dbReference type="Gene3D" id="3.30.200.20">
    <property type="entry name" value="Phosphorylase Kinase, domain 1"/>
    <property type="match status" value="1"/>
</dbReference>
<dbReference type="Gene3D" id="1.10.510.10">
    <property type="entry name" value="Transferase(Phosphotransferase) domain 1"/>
    <property type="match status" value="1"/>
</dbReference>
<dbReference type="InterPro" id="IPR011009">
    <property type="entry name" value="Kinase-like_dom_sf"/>
</dbReference>
<dbReference type="InterPro" id="IPR050660">
    <property type="entry name" value="NEK_Ser/Thr_kinase"/>
</dbReference>
<dbReference type="InterPro" id="IPR000719">
    <property type="entry name" value="Prot_kinase_dom"/>
</dbReference>
<dbReference type="InterPro" id="IPR017441">
    <property type="entry name" value="Protein_kinase_ATP_BS"/>
</dbReference>
<dbReference type="InterPro" id="IPR008271">
    <property type="entry name" value="Ser/Thr_kinase_AS"/>
</dbReference>
<dbReference type="PANTHER" id="PTHR43671">
    <property type="entry name" value="SERINE/THREONINE-PROTEIN KINASE NEK"/>
    <property type="match status" value="1"/>
</dbReference>
<dbReference type="PANTHER" id="PTHR43671:SF45">
    <property type="entry name" value="SERINE_THREONINE-PROTEIN KINASE NEK1-RELATED"/>
    <property type="match status" value="1"/>
</dbReference>
<dbReference type="Pfam" id="PF00069">
    <property type="entry name" value="Pkinase"/>
    <property type="match status" value="1"/>
</dbReference>
<dbReference type="SMART" id="SM00220">
    <property type="entry name" value="S_TKc"/>
    <property type="match status" value="1"/>
</dbReference>
<dbReference type="SUPFAM" id="SSF56112">
    <property type="entry name" value="Protein kinase-like (PK-like)"/>
    <property type="match status" value="1"/>
</dbReference>
<dbReference type="PROSITE" id="PS00107">
    <property type="entry name" value="PROTEIN_KINASE_ATP"/>
    <property type="match status" value="1"/>
</dbReference>
<dbReference type="PROSITE" id="PS50011">
    <property type="entry name" value="PROTEIN_KINASE_DOM"/>
    <property type="match status" value="1"/>
</dbReference>
<dbReference type="PROSITE" id="PS00108">
    <property type="entry name" value="PROTEIN_KINASE_ST"/>
    <property type="match status" value="1"/>
</dbReference>
<reference key="1">
    <citation type="journal article" date="2000" name="Nature">
        <title>Sequence and analysis of chromosome 1 of the plant Arabidopsis thaliana.</title>
        <authorList>
            <person name="Theologis A."/>
            <person name="Ecker J.R."/>
            <person name="Palm C.J."/>
            <person name="Federspiel N.A."/>
            <person name="Kaul S."/>
            <person name="White O."/>
            <person name="Alonso J."/>
            <person name="Altafi H."/>
            <person name="Araujo R."/>
            <person name="Bowman C.L."/>
            <person name="Brooks S.Y."/>
            <person name="Buehler E."/>
            <person name="Chan A."/>
            <person name="Chao Q."/>
            <person name="Chen H."/>
            <person name="Cheuk R.F."/>
            <person name="Chin C.W."/>
            <person name="Chung M.K."/>
            <person name="Conn L."/>
            <person name="Conway A.B."/>
            <person name="Conway A.R."/>
            <person name="Creasy T.H."/>
            <person name="Dewar K."/>
            <person name="Dunn P."/>
            <person name="Etgu P."/>
            <person name="Feldblyum T.V."/>
            <person name="Feng J.-D."/>
            <person name="Fong B."/>
            <person name="Fujii C.Y."/>
            <person name="Gill J.E."/>
            <person name="Goldsmith A.D."/>
            <person name="Haas B."/>
            <person name="Hansen N.F."/>
            <person name="Hughes B."/>
            <person name="Huizar L."/>
            <person name="Hunter J.L."/>
            <person name="Jenkins J."/>
            <person name="Johnson-Hopson C."/>
            <person name="Khan S."/>
            <person name="Khaykin E."/>
            <person name="Kim C.J."/>
            <person name="Koo H.L."/>
            <person name="Kremenetskaia I."/>
            <person name="Kurtz D.B."/>
            <person name="Kwan A."/>
            <person name="Lam B."/>
            <person name="Langin-Hooper S."/>
            <person name="Lee A."/>
            <person name="Lee J.M."/>
            <person name="Lenz C.A."/>
            <person name="Li J.H."/>
            <person name="Li Y.-P."/>
            <person name="Lin X."/>
            <person name="Liu S.X."/>
            <person name="Liu Z.A."/>
            <person name="Luros J.S."/>
            <person name="Maiti R."/>
            <person name="Marziali A."/>
            <person name="Militscher J."/>
            <person name="Miranda M."/>
            <person name="Nguyen M."/>
            <person name="Nierman W.C."/>
            <person name="Osborne B.I."/>
            <person name="Pai G."/>
            <person name="Peterson J."/>
            <person name="Pham P.K."/>
            <person name="Rizzo M."/>
            <person name="Rooney T."/>
            <person name="Rowley D."/>
            <person name="Sakano H."/>
            <person name="Salzberg S.L."/>
            <person name="Schwartz J.R."/>
            <person name="Shinn P."/>
            <person name="Southwick A.M."/>
            <person name="Sun H."/>
            <person name="Tallon L.J."/>
            <person name="Tambunga G."/>
            <person name="Toriumi M.J."/>
            <person name="Town C.D."/>
            <person name="Utterback T."/>
            <person name="Van Aken S."/>
            <person name="Vaysberg M."/>
            <person name="Vysotskaia V.S."/>
            <person name="Walker M."/>
            <person name="Wu D."/>
            <person name="Yu G."/>
            <person name="Fraser C.M."/>
            <person name="Venter J.C."/>
            <person name="Davis R.W."/>
        </authorList>
    </citation>
    <scope>NUCLEOTIDE SEQUENCE [LARGE SCALE GENOMIC DNA]</scope>
    <source>
        <strain>cv. Columbia</strain>
    </source>
</reference>
<reference key="2">
    <citation type="journal article" date="2017" name="Plant J.">
        <title>Araport11: a complete reannotation of the Arabidopsis thaliana reference genome.</title>
        <authorList>
            <person name="Cheng C.Y."/>
            <person name="Krishnakumar V."/>
            <person name="Chan A.P."/>
            <person name="Thibaud-Nissen F."/>
            <person name="Schobel S."/>
            <person name="Town C.D."/>
        </authorList>
    </citation>
    <scope>GENOME REANNOTATION</scope>
    <source>
        <strain>cv. Columbia</strain>
    </source>
</reference>
<reference key="3">
    <citation type="journal article" date="2004" name="Genome Res.">
        <title>Whole genome sequence comparisons and 'full-length' cDNA sequences: a combined approach to evaluate and improve Arabidopsis genome annotation.</title>
        <authorList>
            <person name="Castelli V."/>
            <person name="Aury J.-M."/>
            <person name="Jaillon O."/>
            <person name="Wincker P."/>
            <person name="Clepet C."/>
            <person name="Menard M."/>
            <person name="Cruaud C."/>
            <person name="Quetier F."/>
            <person name="Scarpelli C."/>
            <person name="Schaechter V."/>
            <person name="Temple G."/>
            <person name="Caboche M."/>
            <person name="Weissenbach J."/>
            <person name="Salanoubat M."/>
        </authorList>
    </citation>
    <scope>NUCLEOTIDE SEQUENCE [LARGE SCALE MRNA]</scope>
    <source>
        <strain>cv. Columbia</strain>
    </source>
</reference>
<reference key="4">
    <citation type="journal article" date="2007" name="Plant J.">
        <title>Members of the plant NIMA-related kinases are involved in organ development and vascularization in poplar, Arabidopsis and rice.</title>
        <authorList>
            <person name="Vigneault F."/>
            <person name="Lachance D."/>
            <person name="Cloutier M."/>
            <person name="Pelletier G."/>
            <person name="Levasseur C."/>
            <person name="Seguin A."/>
        </authorList>
    </citation>
    <scope>GENE FAMILY</scope>
    <scope>NOMENCLATURE</scope>
</reference>
<comment type="function">
    <text>May be involved in plant development processes.</text>
</comment>
<comment type="catalytic activity">
    <reaction>
        <text>L-seryl-[protein] + ATP = O-phospho-L-seryl-[protein] + ADP + H(+)</text>
        <dbReference type="Rhea" id="RHEA:17989"/>
        <dbReference type="Rhea" id="RHEA-COMP:9863"/>
        <dbReference type="Rhea" id="RHEA-COMP:11604"/>
        <dbReference type="ChEBI" id="CHEBI:15378"/>
        <dbReference type="ChEBI" id="CHEBI:29999"/>
        <dbReference type="ChEBI" id="CHEBI:30616"/>
        <dbReference type="ChEBI" id="CHEBI:83421"/>
        <dbReference type="ChEBI" id="CHEBI:456216"/>
        <dbReference type="EC" id="2.7.11.1"/>
    </reaction>
</comment>
<comment type="catalytic activity">
    <reaction>
        <text>L-threonyl-[protein] + ATP = O-phospho-L-threonyl-[protein] + ADP + H(+)</text>
        <dbReference type="Rhea" id="RHEA:46608"/>
        <dbReference type="Rhea" id="RHEA-COMP:11060"/>
        <dbReference type="Rhea" id="RHEA-COMP:11605"/>
        <dbReference type="ChEBI" id="CHEBI:15378"/>
        <dbReference type="ChEBI" id="CHEBI:30013"/>
        <dbReference type="ChEBI" id="CHEBI:30616"/>
        <dbReference type="ChEBI" id="CHEBI:61977"/>
        <dbReference type="ChEBI" id="CHEBI:456216"/>
        <dbReference type="EC" id="2.7.11.1"/>
    </reaction>
</comment>
<comment type="similarity">
    <text evidence="4">Belongs to the protein kinase superfamily. NEK Ser/Thr protein kinase family. NIMA subfamily.</text>
</comment>
<comment type="sequence caution" evidence="4">
    <conflict type="erroneous gene model prediction">
        <sequence resource="EMBL-CDS" id="AAD25629"/>
    </conflict>
    <text>Was originally thought to correspond to two different genes.</text>
</comment>
<comment type="sequence caution" evidence="4">
    <conflict type="erroneous gene model prediction">
        <sequence resource="EMBL-CDS" id="AAD25631"/>
    </conflict>
    <text>Was originally thought to correspond to two different genes.</text>
</comment>
<comment type="sequence caution" evidence="4">
    <conflict type="miscellaneous discrepancy">
        <sequence resource="EMBL" id="BX816613"/>
    </conflict>
    <text>Sequencing errors.</text>
</comment>
<name>NEK1_ARATH</name>
<keyword id="KW-0067">ATP-binding</keyword>
<keyword id="KW-0418">Kinase</keyword>
<keyword id="KW-0547">Nucleotide-binding</keyword>
<keyword id="KW-1185">Reference proteome</keyword>
<keyword id="KW-0723">Serine/threonine-protein kinase</keyword>
<keyword id="KW-0808">Transferase</keyword>
<evidence type="ECO:0000255" key="1">
    <source>
        <dbReference type="PROSITE-ProRule" id="PRU00159"/>
    </source>
</evidence>
<evidence type="ECO:0000255" key="2">
    <source>
        <dbReference type="PROSITE-ProRule" id="PRU10027"/>
    </source>
</evidence>
<evidence type="ECO:0000256" key="3">
    <source>
        <dbReference type="SAM" id="MobiDB-lite"/>
    </source>
</evidence>
<evidence type="ECO:0000305" key="4"/>
<proteinExistence type="evidence at transcript level"/>
<accession>Q9SLI2</accession>
<accession>Q9SLI3</accession>